<gene>
    <name evidence="1" type="primary">rpsC</name>
    <name type="ordered locus">Mmc1_0853</name>
</gene>
<accession>A0L5X9</accession>
<keyword id="KW-1185">Reference proteome</keyword>
<keyword id="KW-0687">Ribonucleoprotein</keyword>
<keyword id="KW-0689">Ribosomal protein</keyword>
<keyword id="KW-0694">RNA-binding</keyword>
<keyword id="KW-0699">rRNA-binding</keyword>
<proteinExistence type="inferred from homology"/>
<feature type="chain" id="PRO_0000293819" description="Small ribosomal subunit protein uS3">
    <location>
        <begin position="1"/>
        <end position="210"/>
    </location>
</feature>
<feature type="domain" description="KH type-2" evidence="1">
    <location>
        <begin position="38"/>
        <end position="106"/>
    </location>
</feature>
<organism>
    <name type="scientific">Magnetococcus marinus (strain ATCC BAA-1437 / JCM 17883 / MC-1)</name>
    <dbReference type="NCBI Taxonomy" id="156889"/>
    <lineage>
        <taxon>Bacteria</taxon>
        <taxon>Pseudomonadati</taxon>
        <taxon>Pseudomonadota</taxon>
        <taxon>Alphaproteobacteria</taxon>
        <taxon>Magnetococcales</taxon>
        <taxon>Magnetococcaceae</taxon>
        <taxon>Magnetococcus</taxon>
    </lineage>
</organism>
<comment type="function">
    <text evidence="1">Binds the lower part of the 30S subunit head. Binds mRNA in the 70S ribosome, positioning it for translation.</text>
</comment>
<comment type="subunit">
    <text evidence="1">Part of the 30S ribosomal subunit. Forms a tight complex with proteins S10 and S14.</text>
</comment>
<comment type="similarity">
    <text evidence="1">Belongs to the universal ribosomal protein uS3 family.</text>
</comment>
<name>RS3_MAGMM</name>
<sequence>MGQKVHPTGFRLGTTKTWDTRWFADRNYADLLLEDIKIRAWLKKRLAHASVSKIVIERPAQKARINIHTARPGIIIGKKGGDIEKLKNDIKAITSSEVQINIVEIRKPEADAQLVAENVAQQLERRVAFRRSMKRAVTSAMRLGAEGIRINCAGRLGGAEIARTEWYREGRVPLHTLRADIDYGFAEAHTTYGIIGVKVWVYKGMLIEKK</sequence>
<protein>
    <recommendedName>
        <fullName evidence="1">Small ribosomal subunit protein uS3</fullName>
    </recommendedName>
    <alternativeName>
        <fullName evidence="2">30S ribosomal protein S3</fullName>
    </alternativeName>
</protein>
<evidence type="ECO:0000255" key="1">
    <source>
        <dbReference type="HAMAP-Rule" id="MF_01309"/>
    </source>
</evidence>
<evidence type="ECO:0000305" key="2"/>
<reference key="1">
    <citation type="journal article" date="2009" name="Appl. Environ. Microbiol.">
        <title>Complete genome sequence of the chemolithoautotrophic marine magnetotactic coccus strain MC-1.</title>
        <authorList>
            <person name="Schubbe S."/>
            <person name="Williams T.J."/>
            <person name="Xie G."/>
            <person name="Kiss H.E."/>
            <person name="Brettin T.S."/>
            <person name="Martinez D."/>
            <person name="Ross C.A."/>
            <person name="Schuler D."/>
            <person name="Cox B.L."/>
            <person name="Nealson K.H."/>
            <person name="Bazylinski D.A."/>
        </authorList>
    </citation>
    <scope>NUCLEOTIDE SEQUENCE [LARGE SCALE GENOMIC DNA]</scope>
    <source>
        <strain>ATCC BAA-1437 / JCM 17883 / MC-1</strain>
    </source>
</reference>
<dbReference type="EMBL" id="CP000471">
    <property type="protein sequence ID" value="ABK43372.1"/>
    <property type="molecule type" value="Genomic_DNA"/>
</dbReference>
<dbReference type="RefSeq" id="WP_011712531.1">
    <property type="nucleotide sequence ID" value="NC_008576.1"/>
</dbReference>
<dbReference type="SMR" id="A0L5X9"/>
<dbReference type="STRING" id="156889.Mmc1_0853"/>
<dbReference type="KEGG" id="mgm:Mmc1_0853"/>
<dbReference type="eggNOG" id="COG0092">
    <property type="taxonomic scope" value="Bacteria"/>
</dbReference>
<dbReference type="HOGENOM" id="CLU_058591_0_2_5"/>
<dbReference type="OrthoDB" id="9806396at2"/>
<dbReference type="Proteomes" id="UP000002586">
    <property type="component" value="Chromosome"/>
</dbReference>
<dbReference type="GO" id="GO:0022627">
    <property type="term" value="C:cytosolic small ribosomal subunit"/>
    <property type="evidence" value="ECO:0007669"/>
    <property type="project" value="TreeGrafter"/>
</dbReference>
<dbReference type="GO" id="GO:0003729">
    <property type="term" value="F:mRNA binding"/>
    <property type="evidence" value="ECO:0007669"/>
    <property type="project" value="UniProtKB-UniRule"/>
</dbReference>
<dbReference type="GO" id="GO:0019843">
    <property type="term" value="F:rRNA binding"/>
    <property type="evidence" value="ECO:0007669"/>
    <property type="project" value="UniProtKB-UniRule"/>
</dbReference>
<dbReference type="GO" id="GO:0003735">
    <property type="term" value="F:structural constituent of ribosome"/>
    <property type="evidence" value="ECO:0007669"/>
    <property type="project" value="InterPro"/>
</dbReference>
<dbReference type="GO" id="GO:0006412">
    <property type="term" value="P:translation"/>
    <property type="evidence" value="ECO:0007669"/>
    <property type="project" value="UniProtKB-UniRule"/>
</dbReference>
<dbReference type="CDD" id="cd02412">
    <property type="entry name" value="KH-II_30S_S3"/>
    <property type="match status" value="1"/>
</dbReference>
<dbReference type="FunFam" id="3.30.1140.32:FF:000002">
    <property type="entry name" value="30S ribosomal protein S3"/>
    <property type="match status" value="1"/>
</dbReference>
<dbReference type="FunFam" id="3.30.300.20:FF:000001">
    <property type="entry name" value="30S ribosomal protein S3"/>
    <property type="match status" value="1"/>
</dbReference>
<dbReference type="Gene3D" id="3.30.300.20">
    <property type="match status" value="1"/>
</dbReference>
<dbReference type="Gene3D" id="3.30.1140.32">
    <property type="entry name" value="Ribosomal protein S3, C-terminal domain"/>
    <property type="match status" value="1"/>
</dbReference>
<dbReference type="HAMAP" id="MF_01309_B">
    <property type="entry name" value="Ribosomal_uS3_B"/>
    <property type="match status" value="1"/>
</dbReference>
<dbReference type="InterPro" id="IPR004087">
    <property type="entry name" value="KH_dom"/>
</dbReference>
<dbReference type="InterPro" id="IPR015946">
    <property type="entry name" value="KH_dom-like_a/b"/>
</dbReference>
<dbReference type="InterPro" id="IPR004044">
    <property type="entry name" value="KH_dom_type_2"/>
</dbReference>
<dbReference type="InterPro" id="IPR009019">
    <property type="entry name" value="KH_sf_prok-type"/>
</dbReference>
<dbReference type="InterPro" id="IPR036419">
    <property type="entry name" value="Ribosomal_S3_C_sf"/>
</dbReference>
<dbReference type="InterPro" id="IPR005704">
    <property type="entry name" value="Ribosomal_uS3_bac-typ"/>
</dbReference>
<dbReference type="InterPro" id="IPR001351">
    <property type="entry name" value="Ribosomal_uS3_C"/>
</dbReference>
<dbReference type="InterPro" id="IPR018280">
    <property type="entry name" value="Ribosomal_uS3_CS"/>
</dbReference>
<dbReference type="NCBIfam" id="TIGR01009">
    <property type="entry name" value="rpsC_bact"/>
    <property type="match status" value="1"/>
</dbReference>
<dbReference type="PANTHER" id="PTHR11760">
    <property type="entry name" value="30S/40S RIBOSOMAL PROTEIN S3"/>
    <property type="match status" value="1"/>
</dbReference>
<dbReference type="PANTHER" id="PTHR11760:SF19">
    <property type="entry name" value="SMALL RIBOSOMAL SUBUNIT PROTEIN US3C"/>
    <property type="match status" value="1"/>
</dbReference>
<dbReference type="Pfam" id="PF07650">
    <property type="entry name" value="KH_2"/>
    <property type="match status" value="1"/>
</dbReference>
<dbReference type="Pfam" id="PF00189">
    <property type="entry name" value="Ribosomal_S3_C"/>
    <property type="match status" value="1"/>
</dbReference>
<dbReference type="SMART" id="SM00322">
    <property type="entry name" value="KH"/>
    <property type="match status" value="1"/>
</dbReference>
<dbReference type="SUPFAM" id="SSF54814">
    <property type="entry name" value="Prokaryotic type KH domain (KH-domain type II)"/>
    <property type="match status" value="1"/>
</dbReference>
<dbReference type="SUPFAM" id="SSF54821">
    <property type="entry name" value="Ribosomal protein S3 C-terminal domain"/>
    <property type="match status" value="1"/>
</dbReference>
<dbReference type="PROSITE" id="PS50823">
    <property type="entry name" value="KH_TYPE_2"/>
    <property type="match status" value="1"/>
</dbReference>
<dbReference type="PROSITE" id="PS00548">
    <property type="entry name" value="RIBOSOMAL_S3"/>
    <property type="match status" value="1"/>
</dbReference>